<accession>A0A6G9KHE4</accession>
<proteinExistence type="evidence at protein level"/>
<dbReference type="EMBL" id="MN765042">
    <property type="protein sequence ID" value="QIQ51452.1"/>
    <property type="molecule type" value="mRNA"/>
</dbReference>
<dbReference type="SMR" id="A0A6G9KHE4"/>
<dbReference type="GO" id="GO:0005576">
    <property type="term" value="C:extracellular region"/>
    <property type="evidence" value="ECO:0007669"/>
    <property type="project" value="UniProtKB-SubCell"/>
</dbReference>
<dbReference type="GO" id="GO:0017080">
    <property type="term" value="F:sodium channel regulator activity"/>
    <property type="evidence" value="ECO:0007669"/>
    <property type="project" value="UniProtKB-KW"/>
</dbReference>
<dbReference type="GO" id="GO:0090729">
    <property type="term" value="F:toxin activity"/>
    <property type="evidence" value="ECO:0007669"/>
    <property type="project" value="UniProtKB-KW"/>
</dbReference>
<organism>
    <name type="scientific">Manica rubida</name>
    <name type="common">European giant red ant</name>
    <dbReference type="NCBI Taxonomy" id="219785"/>
    <lineage>
        <taxon>Eukaryota</taxon>
        <taxon>Metazoa</taxon>
        <taxon>Ecdysozoa</taxon>
        <taxon>Arthropoda</taxon>
        <taxon>Hexapoda</taxon>
        <taxon>Insecta</taxon>
        <taxon>Pterygota</taxon>
        <taxon>Neoptera</taxon>
        <taxon>Endopterygota</taxon>
        <taxon>Hymenoptera</taxon>
        <taxon>Apocrita</taxon>
        <taxon>Aculeata</taxon>
        <taxon>Formicoidea</taxon>
        <taxon>Formicidae</taxon>
        <taxon>Myrmicinae</taxon>
        <taxon>Manica</taxon>
    </lineage>
</organism>
<feature type="signal peptide" evidence="1">
    <location>
        <begin position="1"/>
        <end position="23"/>
    </location>
</feature>
<feature type="propeptide" id="PRO_0000459152" evidence="7">
    <location>
        <begin position="24"/>
        <end position="83"/>
    </location>
</feature>
<feature type="peptide" id="PRO_0000459153" description="Delta-myrmicitoxin-Mri1a" evidence="2">
    <location>
        <begin position="84"/>
        <end position="103"/>
    </location>
</feature>
<feature type="modified residue" description="Asparagine amide" evidence="2">
    <location>
        <position position="103"/>
    </location>
</feature>
<sequence length="104" mass="10384">MEVPKFLFIAVIVIALSSSLTWAHPMAAPDPNAEAAAGAWAEPAAEPAAEAVAEAAAEAAAEAAAEAVAEAVAEALAEAESEPGLPLLALLMTLPFIQHAITNG</sequence>
<evidence type="ECO:0000255" key="1"/>
<evidence type="ECO:0000269" key="2">
    <source>
    </source>
</evidence>
<evidence type="ECO:0000269" key="3">
    <source>
    </source>
</evidence>
<evidence type="ECO:0000303" key="4">
    <source>
    </source>
</evidence>
<evidence type="ECO:0000303" key="5">
    <source>
    </source>
</evidence>
<evidence type="ECO:0000305" key="6"/>
<evidence type="ECO:0000305" key="7">
    <source>
    </source>
</evidence>
<evidence type="ECO:0000312" key="8">
    <source>
        <dbReference type="EMBL" id="QIQ51452.1"/>
    </source>
</evidence>
<reference evidence="8" key="1">
    <citation type="journal article" date="2020" name="J. Proteome Res.">
        <title>Venom Peptide Repertoire of the European Myrmicine Ant Manica rubida: Identification of Insecticidal Toxins.</title>
        <authorList>
            <person name="Touchard A."/>
            <person name="Aili S.R."/>
            <person name="Tene N."/>
            <person name="Barasse V."/>
            <person name="Klopp C."/>
            <person name="Dejean A."/>
            <person name="Kini R.M."/>
            <person name="Mrinalini X."/>
            <person name="Coquet L."/>
            <person name="Jouenne T."/>
            <person name="Lefranc B."/>
            <person name="Leprince J."/>
            <person name="Escoubas P."/>
            <person name="Nicholson G.M."/>
            <person name="Treilhou M."/>
            <person name="Bonnafe E."/>
        </authorList>
    </citation>
    <scope>NUCLEOTIDE SEQUENCE [MRNA]</scope>
    <scope>FUNCTION</scope>
    <scope>MASS SPECTROMETRY</scope>
    <scope>BIOASSAY</scope>
    <scope>SYNTHESIS OF 84-103</scope>
    <scope>AMIDATION AT ASN-103</scope>
    <scope>SUBCELLULAR LOCATION</scope>
    <source>
        <tissue>Venom</tissue>
        <tissue>Venom gland</tissue>
    </source>
</reference>
<reference key="2">
    <citation type="journal article" date="2023" name="Nat. Commun.">
        <title>Ant venoms contain vertebrate-selective pain-causing sodium channel toxins.</title>
        <authorList>
            <person name="Robinson S.D."/>
            <person name="Deuis J.R."/>
            <person name="Touchard A."/>
            <person name="Keramidas A."/>
            <person name="Mueller A."/>
            <person name="Schroeder C.I."/>
            <person name="Barasse V."/>
            <person name="Walker A.A."/>
            <person name="Brinkwirth N."/>
            <person name="Jami S."/>
            <person name="Bonnafe E."/>
            <person name="Treilhou M."/>
            <person name="Undheim E.A.B."/>
            <person name="Schmidt J.O."/>
            <person name="King G.F."/>
            <person name="Vetter I."/>
        </authorList>
    </citation>
    <scope>FUNCTION</scope>
    <scope>SYNTHESIS</scope>
    <scope>BIOASSAY</scope>
</reference>
<name>MRI1A_MANRB</name>
<comment type="function">
    <text evidence="2 3">Vertebrate selective toxin that causes moderate pain by targeting tetrodotoxin (TTX)-sensitive sodium channels in peripheral sensory neurons (PubMed:37221205). Shows moderate and low activities towards hNav1.6/SCN8A (EC(50)=3.3 uM) and hNav1.7/SCN9A (EC(50)&gt;10 uM), respectively (PubMed:37221205). At both hNav1.6/SCN8A and hNav1.7/SCN9A, causes a small sustained current, a reduction in peak current amplitude, and a hyperpolarising shift in the voltage dependence of activation (PubMed:37221205). The small sustained current remains after repolarisation at Nav1.7/SCN9A, but not at Nav1.6/SCN8A (PubMed:37221205). In vivo, intraplantar injection into mice causes moderate dose-dependent spontaneous nocifensive behaviors (PubMed:37221205). Does not show insecticidal activity, even at up to 55 nmol/g (PubMed:32182430, PubMed:37221205).</text>
</comment>
<comment type="subcellular location">
    <subcellularLocation>
        <location evidence="2">Secreted</location>
    </subcellularLocation>
</comment>
<comment type="tissue specificity">
    <text evidence="7">Expressed by the venom gland.</text>
</comment>
<comment type="mass spectrometry" mass="2174.27" method="Electrospray" evidence="2"/>
<comment type="miscellaneous">
    <text evidence="3">Negative results: does not show activity at hNav1.8/SCN10A and hNav1.9/SCN11A when tested at 1 uM.</text>
</comment>
<comment type="similarity">
    <text evidence="6">Belongs to the formicidae venom clade 1 family.</text>
</comment>
<protein>
    <recommendedName>
        <fullName evidence="6">Delta-myrmicitoxin-Mri1a</fullName>
        <shortName evidence="6">Delta-MYRTX-Mri1a</shortName>
    </recommendedName>
    <alternativeName>
        <fullName evidence="4">U3-myrmicitoxin-Mri1a</fullName>
        <shortName evidence="4">U3-MYRTX-Mri1a</shortName>
        <shortName evidence="5">U3-MYTX-Mri1a</shortName>
    </alternativeName>
</protein>
<keyword id="KW-0027">Amidation</keyword>
<keyword id="KW-0872">Ion channel impairing toxin</keyword>
<keyword id="KW-0528">Neurotoxin</keyword>
<keyword id="KW-0964">Secreted</keyword>
<keyword id="KW-0732">Signal</keyword>
<keyword id="KW-0800">Toxin</keyword>
<keyword id="KW-0738">Voltage-gated sodium channel impairing toxin</keyword>